<accession>B2FPR4</accession>
<evidence type="ECO:0000255" key="1">
    <source>
        <dbReference type="HAMAP-Rule" id="MF_00244"/>
    </source>
</evidence>
<keyword id="KW-0067">ATP-binding</keyword>
<keyword id="KW-0520">NAD</keyword>
<keyword id="KW-0547">Nucleotide-binding</keyword>
<keyword id="KW-0548">Nucleotidyltransferase</keyword>
<keyword id="KW-0662">Pyridine nucleotide biosynthesis</keyword>
<keyword id="KW-1185">Reference proteome</keyword>
<keyword id="KW-0808">Transferase</keyword>
<gene>
    <name evidence="1" type="primary">nadD</name>
    <name type="ordered locus">Smlt3482</name>
</gene>
<reference key="1">
    <citation type="journal article" date="2008" name="Genome Biol.">
        <title>The complete genome, comparative and functional analysis of Stenotrophomonas maltophilia reveals an organism heavily shielded by drug resistance determinants.</title>
        <authorList>
            <person name="Crossman L.C."/>
            <person name="Gould V.C."/>
            <person name="Dow J.M."/>
            <person name="Vernikos G.S."/>
            <person name="Okazaki A."/>
            <person name="Sebaihia M."/>
            <person name="Saunders D."/>
            <person name="Arrowsmith C."/>
            <person name="Carver T."/>
            <person name="Peters N."/>
            <person name="Adlem E."/>
            <person name="Kerhornou A."/>
            <person name="Lord A."/>
            <person name="Murphy L."/>
            <person name="Seeger K."/>
            <person name="Squares R."/>
            <person name="Rutter S."/>
            <person name="Quail M.A."/>
            <person name="Rajandream M.A."/>
            <person name="Harris D."/>
            <person name="Churcher C."/>
            <person name="Bentley S.D."/>
            <person name="Parkhill J."/>
            <person name="Thomson N.R."/>
            <person name="Avison M.B."/>
        </authorList>
    </citation>
    <scope>NUCLEOTIDE SEQUENCE [LARGE SCALE GENOMIC DNA]</scope>
    <source>
        <strain>K279a</strain>
    </source>
</reference>
<comment type="function">
    <text evidence="1">Catalyzes the reversible adenylation of nicotinate mononucleotide (NaMN) to nicotinic acid adenine dinucleotide (NaAD).</text>
</comment>
<comment type="catalytic activity">
    <reaction evidence="1">
        <text>nicotinate beta-D-ribonucleotide + ATP + H(+) = deamido-NAD(+) + diphosphate</text>
        <dbReference type="Rhea" id="RHEA:22860"/>
        <dbReference type="ChEBI" id="CHEBI:15378"/>
        <dbReference type="ChEBI" id="CHEBI:30616"/>
        <dbReference type="ChEBI" id="CHEBI:33019"/>
        <dbReference type="ChEBI" id="CHEBI:57502"/>
        <dbReference type="ChEBI" id="CHEBI:58437"/>
        <dbReference type="EC" id="2.7.7.18"/>
    </reaction>
</comment>
<comment type="pathway">
    <text evidence="1">Cofactor biosynthesis; NAD(+) biosynthesis; deamido-NAD(+) from nicotinate D-ribonucleotide: step 1/1.</text>
</comment>
<comment type="similarity">
    <text evidence="1">Belongs to the NadD family.</text>
</comment>
<feature type="chain" id="PRO_1000100796" description="Probable nicotinate-nucleotide adenylyltransferase">
    <location>
        <begin position="1"/>
        <end position="222"/>
    </location>
</feature>
<proteinExistence type="inferred from homology"/>
<sequence length="222" mass="24188">MMSLRIYYGGTFDPVHLGHLAIARAARDELQVAVRMLPAADPPHRAVPGATADQRFTMLSLAIGDEPGLLLDHRELDRAIRFPGRPSYTVDTLRELRGELGPSRPLAWLVGADSLLGLTRWHEWEALFGLAHFVVAERPGSPLQASVDGELGRALEGRWADNEQALFASPAGRILRLHHPLREESASAVRAQIAAGGPWRALLPPAVADYVAAHGLYRSPTP</sequence>
<organism>
    <name type="scientific">Stenotrophomonas maltophilia (strain K279a)</name>
    <dbReference type="NCBI Taxonomy" id="522373"/>
    <lineage>
        <taxon>Bacteria</taxon>
        <taxon>Pseudomonadati</taxon>
        <taxon>Pseudomonadota</taxon>
        <taxon>Gammaproteobacteria</taxon>
        <taxon>Lysobacterales</taxon>
        <taxon>Lysobacteraceae</taxon>
        <taxon>Stenotrophomonas</taxon>
        <taxon>Stenotrophomonas maltophilia group</taxon>
    </lineage>
</organism>
<dbReference type="EC" id="2.7.7.18" evidence="1"/>
<dbReference type="EMBL" id="AM743169">
    <property type="protein sequence ID" value="CAQ46905.1"/>
    <property type="molecule type" value="Genomic_DNA"/>
</dbReference>
<dbReference type="SMR" id="B2FPR4"/>
<dbReference type="EnsemblBacteria" id="CAQ46905">
    <property type="protein sequence ID" value="CAQ46905"/>
    <property type="gene ID" value="Smlt3482"/>
</dbReference>
<dbReference type="KEGG" id="sml:Smlt3482"/>
<dbReference type="eggNOG" id="COG1057">
    <property type="taxonomic scope" value="Bacteria"/>
</dbReference>
<dbReference type="HOGENOM" id="CLU_069765_0_0_6"/>
<dbReference type="UniPathway" id="UPA00253">
    <property type="reaction ID" value="UER00332"/>
</dbReference>
<dbReference type="Proteomes" id="UP000008840">
    <property type="component" value="Chromosome"/>
</dbReference>
<dbReference type="GO" id="GO:0005524">
    <property type="term" value="F:ATP binding"/>
    <property type="evidence" value="ECO:0007669"/>
    <property type="project" value="UniProtKB-KW"/>
</dbReference>
<dbReference type="GO" id="GO:0004515">
    <property type="term" value="F:nicotinate-nucleotide adenylyltransferase activity"/>
    <property type="evidence" value="ECO:0007669"/>
    <property type="project" value="UniProtKB-UniRule"/>
</dbReference>
<dbReference type="GO" id="GO:0009435">
    <property type="term" value="P:NAD biosynthetic process"/>
    <property type="evidence" value="ECO:0007669"/>
    <property type="project" value="UniProtKB-UniRule"/>
</dbReference>
<dbReference type="CDD" id="cd02165">
    <property type="entry name" value="NMNAT"/>
    <property type="match status" value="1"/>
</dbReference>
<dbReference type="Gene3D" id="3.40.50.620">
    <property type="entry name" value="HUPs"/>
    <property type="match status" value="1"/>
</dbReference>
<dbReference type="HAMAP" id="MF_00244">
    <property type="entry name" value="NaMN_adenylyltr"/>
    <property type="match status" value="1"/>
</dbReference>
<dbReference type="InterPro" id="IPR004821">
    <property type="entry name" value="Cyt_trans-like"/>
</dbReference>
<dbReference type="InterPro" id="IPR005248">
    <property type="entry name" value="NadD/NMNAT"/>
</dbReference>
<dbReference type="InterPro" id="IPR014729">
    <property type="entry name" value="Rossmann-like_a/b/a_fold"/>
</dbReference>
<dbReference type="NCBIfam" id="TIGR00125">
    <property type="entry name" value="cyt_tran_rel"/>
    <property type="match status" value="1"/>
</dbReference>
<dbReference type="NCBIfam" id="TIGR00482">
    <property type="entry name" value="nicotinate (nicotinamide) nucleotide adenylyltransferase"/>
    <property type="match status" value="1"/>
</dbReference>
<dbReference type="NCBIfam" id="NF000839">
    <property type="entry name" value="PRK00071.1-1"/>
    <property type="match status" value="1"/>
</dbReference>
<dbReference type="PANTHER" id="PTHR21342:SF0">
    <property type="entry name" value="BIFUNCTIONAL NMN ADENYLYLTRANSFERASE_NUDIX HYDROLASE"/>
    <property type="match status" value="1"/>
</dbReference>
<dbReference type="PANTHER" id="PTHR21342">
    <property type="entry name" value="PHOSPHOPANTETHEINE ADENYLYLTRANSFERASE"/>
    <property type="match status" value="1"/>
</dbReference>
<dbReference type="Pfam" id="PF01467">
    <property type="entry name" value="CTP_transf_like"/>
    <property type="match status" value="1"/>
</dbReference>
<dbReference type="SUPFAM" id="SSF52374">
    <property type="entry name" value="Nucleotidylyl transferase"/>
    <property type="match status" value="1"/>
</dbReference>
<protein>
    <recommendedName>
        <fullName evidence="1">Probable nicotinate-nucleotide adenylyltransferase</fullName>
        <ecNumber evidence="1">2.7.7.18</ecNumber>
    </recommendedName>
    <alternativeName>
        <fullName evidence="1">Deamido-NAD(+) diphosphorylase</fullName>
    </alternativeName>
    <alternativeName>
        <fullName evidence="1">Deamido-NAD(+) pyrophosphorylase</fullName>
    </alternativeName>
    <alternativeName>
        <fullName evidence="1">Nicotinate mononucleotide adenylyltransferase</fullName>
        <shortName evidence="1">NaMN adenylyltransferase</shortName>
    </alternativeName>
</protein>
<name>NADD_STRMK</name>